<feature type="chain" id="PRO_1000046832" description="Probable flagellum biosynthesis repressor protein FlbT">
    <location>
        <begin position="1"/>
        <end position="152"/>
    </location>
</feature>
<keyword id="KW-1005">Bacterial flagellum biogenesis</keyword>
<keyword id="KW-1185">Reference proteome</keyword>
<keyword id="KW-0678">Repressor</keyword>
<keyword id="KW-0694">RNA-binding</keyword>
<accession>A6X6N5</accession>
<comment type="function">
    <text evidence="1">Has a post-transcriptional repressor function in flagellum biogenesis. Associates with the 5'-UTR of fljK mRNA and promotes its degradation.</text>
</comment>
<comment type="similarity">
    <text evidence="1">Belongs to the FlbT family.</text>
</comment>
<gene>
    <name evidence="1" type="primary">flbT</name>
    <name type="ordered locus">Oant_4189</name>
</gene>
<protein>
    <recommendedName>
        <fullName evidence="1">Probable flagellum biosynthesis repressor protein FlbT</fullName>
    </recommendedName>
</protein>
<name>FLBT_BRUA4</name>
<sequence length="152" mass="17003">MTPNGKPAIRLSLRAGERIFINGAVLRADRKVSLELLNDATFLLENHVLQPEDTTTPLRQLYFAAQMMLIEPAMREQAHSTFAQMLKGMFSTFKDAEILNALKLVDELVHNGRIFEALKTIRAQYPREAELMGLESPVLPVAATRKSAEANP</sequence>
<reference key="1">
    <citation type="journal article" date="2011" name="J. Bacteriol.">
        <title>Genome of Ochrobactrum anthropi ATCC 49188 T, a versatile opportunistic pathogen and symbiont of several eukaryotic hosts.</title>
        <authorList>
            <person name="Chain P.S."/>
            <person name="Lang D.M."/>
            <person name="Comerci D.J."/>
            <person name="Malfatti S.A."/>
            <person name="Vergez L.M."/>
            <person name="Shin M."/>
            <person name="Ugalde R.A."/>
            <person name="Garcia E."/>
            <person name="Tolmasky M.E."/>
        </authorList>
    </citation>
    <scope>NUCLEOTIDE SEQUENCE [LARGE SCALE GENOMIC DNA]</scope>
    <source>
        <strain>ATCC 49188 / DSM 6882 / CCUG 24695 / JCM 21032 / LMG 3331 / NBRC 15819 / NCTC 12168 / Alc 37</strain>
    </source>
</reference>
<dbReference type="EMBL" id="CP000759">
    <property type="protein sequence ID" value="ABS16889.1"/>
    <property type="molecule type" value="Genomic_DNA"/>
</dbReference>
<dbReference type="RefSeq" id="WP_012093496.1">
    <property type="nucleotide sequence ID" value="NC_009668.1"/>
</dbReference>
<dbReference type="SMR" id="A6X6N5"/>
<dbReference type="STRING" id="439375.Oant_4189"/>
<dbReference type="KEGG" id="oan:Oant_4189"/>
<dbReference type="eggNOG" id="COG5443">
    <property type="taxonomic scope" value="Bacteria"/>
</dbReference>
<dbReference type="HOGENOM" id="CLU_130913_1_0_5"/>
<dbReference type="PhylomeDB" id="A6X6N5"/>
<dbReference type="Proteomes" id="UP000002301">
    <property type="component" value="Chromosome 2"/>
</dbReference>
<dbReference type="GO" id="GO:0048027">
    <property type="term" value="F:mRNA 5'-UTR binding"/>
    <property type="evidence" value="ECO:0007669"/>
    <property type="project" value="UniProtKB-UniRule"/>
</dbReference>
<dbReference type="GO" id="GO:0044781">
    <property type="term" value="P:bacterial-type flagellum organization"/>
    <property type="evidence" value="ECO:0007669"/>
    <property type="project" value="UniProtKB-KW"/>
</dbReference>
<dbReference type="GO" id="GO:0006402">
    <property type="term" value="P:mRNA catabolic process"/>
    <property type="evidence" value="ECO:0007669"/>
    <property type="project" value="InterPro"/>
</dbReference>
<dbReference type="GO" id="GO:1902209">
    <property type="term" value="P:negative regulation of bacterial-type flagellum assembly"/>
    <property type="evidence" value="ECO:0007669"/>
    <property type="project" value="UniProtKB-UniRule"/>
</dbReference>
<dbReference type="HAMAP" id="MF_00783">
    <property type="entry name" value="FlbT"/>
    <property type="match status" value="1"/>
</dbReference>
<dbReference type="InterPro" id="IPR009967">
    <property type="entry name" value="Flagellum_FlbT"/>
</dbReference>
<dbReference type="NCBIfam" id="NF001995">
    <property type="entry name" value="PRK00794.1-1"/>
    <property type="match status" value="1"/>
</dbReference>
<dbReference type="Pfam" id="PF07378">
    <property type="entry name" value="FlbT"/>
    <property type="match status" value="1"/>
</dbReference>
<dbReference type="PIRSF" id="PIRSF009533">
    <property type="entry name" value="FlbT"/>
    <property type="match status" value="1"/>
</dbReference>
<proteinExistence type="inferred from homology"/>
<evidence type="ECO:0000255" key="1">
    <source>
        <dbReference type="HAMAP-Rule" id="MF_00783"/>
    </source>
</evidence>
<organism>
    <name type="scientific">Brucella anthropi (strain ATCC 49188 / DSM 6882 / CCUG 24695 / JCM 21032 / LMG 3331 / NBRC 15819 / NCTC 12168 / Alc 37)</name>
    <name type="common">Ochrobactrum anthropi</name>
    <dbReference type="NCBI Taxonomy" id="439375"/>
    <lineage>
        <taxon>Bacteria</taxon>
        <taxon>Pseudomonadati</taxon>
        <taxon>Pseudomonadota</taxon>
        <taxon>Alphaproteobacteria</taxon>
        <taxon>Hyphomicrobiales</taxon>
        <taxon>Brucellaceae</taxon>
        <taxon>Brucella/Ochrobactrum group</taxon>
        <taxon>Brucella</taxon>
    </lineage>
</organism>